<organism>
    <name type="scientific">Acidianus bottle-shaped virus (isolate Italy/Pozzuoli)</name>
    <name type="common">ABV</name>
    <dbReference type="NCBI Taxonomy" id="654911"/>
    <lineage>
        <taxon>Viruses</taxon>
        <taxon>Viruses incertae sedis</taxon>
        <taxon>Ampullaviridae</taxon>
        <taxon>Bottigliavirus</taxon>
        <taxon>Bottigliavirus ABV</taxon>
    </lineage>
</organism>
<proteinExistence type="predicted"/>
<reference key="1">
    <citation type="journal article" date="2007" name="Virology">
        <title>Genome of the Acidianus bottle-shaped virus and insights into the replication and packaging mechanisms.</title>
        <authorList>
            <person name="Peng X."/>
            <person name="Basta T."/>
            <person name="Haring M."/>
            <person name="Garrett R.A."/>
            <person name="Prangishvili D."/>
        </authorList>
    </citation>
    <scope>NUCLEOTIDE SEQUENCE [GENOMIC DNA]</scope>
</reference>
<name>Y243_ABVP</name>
<keyword id="KW-1185">Reference proteome</keyword>
<organismHost>
    <name type="scientific">Acidianus convivator</name>
    <dbReference type="NCBI Taxonomy" id="269667"/>
</organismHost>
<sequence length="243" mass="28841">METKFSDVINGLKEWYDEYLKLYPEYKNFLTLLEIVSEEGPDKAIDNEEFNKLVINAVTKQPKIYKIYLTSDDGIYPLPTWNSDVYVEHFEQYYIDRIVFSRKYRHNRDFLIGLTEYYGSLVGLTKIAIDAVVSDYVREQLGIYHMSLDKALQLNLSIPINTLLDRIRNNYKVPIIKEMDEENPVVPEERPKSNNEPTYRQMINEYQEKAPVEIKLTPEEIEEEITRRILDETIEDEYDEIES</sequence>
<accession>A4ZU90</accession>
<dbReference type="EMBL" id="EF432053">
    <property type="protein sequence ID" value="ABP73394.1"/>
    <property type="molecule type" value="Genomic_DNA"/>
</dbReference>
<dbReference type="RefSeq" id="YP_001210308.1">
    <property type="nucleotide sequence ID" value="NC_009452.1"/>
</dbReference>
<dbReference type="SMR" id="A4ZU90"/>
<dbReference type="GeneID" id="5129801"/>
<dbReference type="KEGG" id="vg:5129801"/>
<dbReference type="Proteomes" id="UP000000513">
    <property type="component" value="Segment"/>
</dbReference>
<feature type="chain" id="PRO_0000384865" description="Uncharacterized protein ORF243">
    <location>
        <begin position="1"/>
        <end position="243"/>
    </location>
</feature>
<protein>
    <recommendedName>
        <fullName>Uncharacterized protein ORF243</fullName>
    </recommendedName>
</protein>
<gene>
    <name type="ORF">ORF243</name>
</gene>